<comment type="function">
    <text evidence="1">Purine salvage pathway enzyme that catalyzes the transfer of the ribosyl-5-phosphate group from 5-phospho-alpha-D-ribose 1-diphosphate (PRPP) to the N9 position of the 6-oxopurines guanine and xanthine to form the corresponding ribonucleotides GMP (guanosine 5'-monophosphate) and XMP (xanthosine 5'-monophosphate), with the release of PPi. To a lesser extent, also acts on hypoxanthine.</text>
</comment>
<comment type="catalytic activity">
    <reaction evidence="1">
        <text>GMP + diphosphate = guanine + 5-phospho-alpha-D-ribose 1-diphosphate</text>
        <dbReference type="Rhea" id="RHEA:25424"/>
        <dbReference type="ChEBI" id="CHEBI:16235"/>
        <dbReference type="ChEBI" id="CHEBI:33019"/>
        <dbReference type="ChEBI" id="CHEBI:58017"/>
        <dbReference type="ChEBI" id="CHEBI:58115"/>
    </reaction>
    <physiologicalReaction direction="right-to-left" evidence="1">
        <dbReference type="Rhea" id="RHEA:25426"/>
    </physiologicalReaction>
</comment>
<comment type="catalytic activity">
    <reaction evidence="1">
        <text>XMP + diphosphate = xanthine + 5-phospho-alpha-D-ribose 1-diphosphate</text>
        <dbReference type="Rhea" id="RHEA:10800"/>
        <dbReference type="ChEBI" id="CHEBI:17712"/>
        <dbReference type="ChEBI" id="CHEBI:33019"/>
        <dbReference type="ChEBI" id="CHEBI:57464"/>
        <dbReference type="ChEBI" id="CHEBI:58017"/>
        <dbReference type="EC" id="2.4.2.22"/>
    </reaction>
    <physiologicalReaction direction="right-to-left" evidence="1">
        <dbReference type="Rhea" id="RHEA:10802"/>
    </physiologicalReaction>
</comment>
<comment type="catalytic activity">
    <reaction evidence="1">
        <text>IMP + diphosphate = hypoxanthine + 5-phospho-alpha-D-ribose 1-diphosphate</text>
        <dbReference type="Rhea" id="RHEA:17973"/>
        <dbReference type="ChEBI" id="CHEBI:17368"/>
        <dbReference type="ChEBI" id="CHEBI:33019"/>
        <dbReference type="ChEBI" id="CHEBI:58017"/>
        <dbReference type="ChEBI" id="CHEBI:58053"/>
    </reaction>
    <physiologicalReaction direction="right-to-left" evidence="1">
        <dbReference type="Rhea" id="RHEA:17975"/>
    </physiologicalReaction>
</comment>
<comment type="cofactor">
    <cofactor evidence="1">
        <name>Mg(2+)</name>
        <dbReference type="ChEBI" id="CHEBI:18420"/>
    </cofactor>
</comment>
<comment type="pathway">
    <text evidence="1">Purine metabolism; GMP biosynthesis via salvage pathway; GMP from guanine: step 1/1.</text>
</comment>
<comment type="pathway">
    <text evidence="1">Purine metabolism; XMP biosynthesis via salvage pathway; XMP from xanthine: step 1/1.</text>
</comment>
<comment type="subunit">
    <text evidence="1">Homotetramer.</text>
</comment>
<comment type="subcellular location">
    <subcellularLocation>
        <location evidence="1">Cell inner membrane</location>
        <topology evidence="1">Peripheral membrane protein</topology>
    </subcellularLocation>
</comment>
<comment type="similarity">
    <text evidence="1">Belongs to the purine/pyrimidine phosphoribosyltransferase family. XGPT subfamily.</text>
</comment>
<feature type="chain" id="PRO_1000070614" description="Xanthine-guanine phosphoribosyltransferase">
    <location>
        <begin position="1"/>
        <end position="152"/>
    </location>
</feature>
<feature type="binding site" evidence="1">
    <location>
        <begin position="37"/>
        <end position="38"/>
    </location>
    <ligand>
        <name>5-phospho-alpha-D-ribose 1-diphosphate</name>
        <dbReference type="ChEBI" id="CHEBI:58017"/>
    </ligand>
</feature>
<feature type="binding site" evidence="1">
    <location>
        <position position="69"/>
    </location>
    <ligand>
        <name>5-phospho-alpha-D-ribose 1-diphosphate</name>
        <dbReference type="ChEBI" id="CHEBI:58017"/>
    </ligand>
</feature>
<feature type="binding site" evidence="1">
    <location>
        <position position="69"/>
    </location>
    <ligand>
        <name>GMP</name>
        <dbReference type="ChEBI" id="CHEBI:58115"/>
    </ligand>
</feature>
<feature type="binding site" evidence="1">
    <location>
        <begin position="88"/>
        <end position="96"/>
    </location>
    <ligand>
        <name>5-phospho-alpha-D-ribose 1-diphosphate</name>
        <dbReference type="ChEBI" id="CHEBI:58017"/>
    </ligand>
</feature>
<feature type="binding site" evidence="1">
    <location>
        <position position="89"/>
    </location>
    <ligand>
        <name>Mg(2+)</name>
        <dbReference type="ChEBI" id="CHEBI:18420"/>
    </ligand>
</feature>
<feature type="binding site" evidence="1">
    <location>
        <begin position="92"/>
        <end position="96"/>
    </location>
    <ligand>
        <name>GMP</name>
        <dbReference type="ChEBI" id="CHEBI:58115"/>
    </ligand>
</feature>
<feature type="binding site" evidence="1">
    <location>
        <position position="92"/>
    </location>
    <ligand>
        <name>guanine</name>
        <dbReference type="ChEBI" id="CHEBI:16235"/>
    </ligand>
</feature>
<feature type="binding site" evidence="1">
    <location>
        <position position="92"/>
    </location>
    <ligand>
        <name>xanthine</name>
        <dbReference type="ChEBI" id="CHEBI:17712"/>
    </ligand>
</feature>
<feature type="binding site" evidence="1">
    <location>
        <begin position="134"/>
        <end position="135"/>
    </location>
    <ligand>
        <name>GMP</name>
        <dbReference type="ChEBI" id="CHEBI:58115"/>
    </ligand>
</feature>
<feature type="binding site" evidence="1">
    <location>
        <position position="135"/>
    </location>
    <ligand>
        <name>guanine</name>
        <dbReference type="ChEBI" id="CHEBI:16235"/>
    </ligand>
</feature>
<feature type="binding site" evidence="1">
    <location>
        <position position="135"/>
    </location>
    <ligand>
        <name>xanthine</name>
        <dbReference type="ChEBI" id="CHEBI:17712"/>
    </ligand>
</feature>
<reference key="1">
    <citation type="submission" date="2007-09" db="EMBL/GenBank/DDBJ databases">
        <title>Complete sequence of chromosome of Serratia proteamaculans 568.</title>
        <authorList>
            <consortium name="US DOE Joint Genome Institute"/>
            <person name="Copeland A."/>
            <person name="Lucas S."/>
            <person name="Lapidus A."/>
            <person name="Barry K."/>
            <person name="Glavina del Rio T."/>
            <person name="Dalin E."/>
            <person name="Tice H."/>
            <person name="Pitluck S."/>
            <person name="Chain P."/>
            <person name="Malfatti S."/>
            <person name="Shin M."/>
            <person name="Vergez L."/>
            <person name="Schmutz J."/>
            <person name="Larimer F."/>
            <person name="Land M."/>
            <person name="Hauser L."/>
            <person name="Kyrpides N."/>
            <person name="Kim E."/>
            <person name="Taghavi S."/>
            <person name="Newman L."/>
            <person name="Vangronsveld J."/>
            <person name="van der Lelie D."/>
            <person name="Richardson P."/>
        </authorList>
    </citation>
    <scope>NUCLEOTIDE SEQUENCE [LARGE SCALE GENOMIC DNA]</scope>
    <source>
        <strain>568</strain>
    </source>
</reference>
<organism>
    <name type="scientific">Serratia proteamaculans (strain 568)</name>
    <dbReference type="NCBI Taxonomy" id="399741"/>
    <lineage>
        <taxon>Bacteria</taxon>
        <taxon>Pseudomonadati</taxon>
        <taxon>Pseudomonadota</taxon>
        <taxon>Gammaproteobacteria</taxon>
        <taxon>Enterobacterales</taxon>
        <taxon>Yersiniaceae</taxon>
        <taxon>Serratia</taxon>
    </lineage>
</organism>
<gene>
    <name evidence="1" type="primary">gpt</name>
    <name type="ordered locus">Spro_0964</name>
</gene>
<protein>
    <recommendedName>
        <fullName evidence="1">Xanthine-guanine phosphoribosyltransferase</fullName>
        <shortName evidence="1">XGPRT</shortName>
        <ecNumber evidence="1">2.4.2.-</ecNumber>
        <ecNumber evidence="1">2.4.2.22</ecNumber>
    </recommendedName>
    <alternativeName>
        <fullName evidence="1">Xanthine phosphoribosyltransferase</fullName>
    </alternativeName>
</protein>
<keyword id="KW-0997">Cell inner membrane</keyword>
<keyword id="KW-1003">Cell membrane</keyword>
<keyword id="KW-0328">Glycosyltransferase</keyword>
<keyword id="KW-0460">Magnesium</keyword>
<keyword id="KW-0472">Membrane</keyword>
<keyword id="KW-0479">Metal-binding</keyword>
<keyword id="KW-0660">Purine salvage</keyword>
<keyword id="KW-0808">Transferase</keyword>
<proteinExistence type="inferred from homology"/>
<name>XGPT_SERP5</name>
<evidence type="ECO:0000255" key="1">
    <source>
        <dbReference type="HAMAP-Rule" id="MF_01903"/>
    </source>
</evidence>
<sequence length="152" mass="16988">MSEKYVVTWDMLQMQARKLAHRLLPADQWTGIIAVSRGGLVPAALLARELGIRHVDTVCISSYDHDNQREMKVLKRAEGDGEGFIVIDDLVDTGGTAKAIREMYPKAHFVTIFAKPAGRPLVDDYVVDIPQDTWIEQPWDMAVTFVPPIGGR</sequence>
<accession>A8GAD0</accession>
<dbReference type="EC" id="2.4.2.-" evidence="1"/>
<dbReference type="EC" id="2.4.2.22" evidence="1"/>
<dbReference type="EMBL" id="CP000826">
    <property type="protein sequence ID" value="ABV40070.1"/>
    <property type="molecule type" value="Genomic_DNA"/>
</dbReference>
<dbReference type="SMR" id="A8GAD0"/>
<dbReference type="STRING" id="399741.Spro_0964"/>
<dbReference type="KEGG" id="spe:Spro_0964"/>
<dbReference type="eggNOG" id="COG2236">
    <property type="taxonomic scope" value="Bacteria"/>
</dbReference>
<dbReference type="HOGENOM" id="CLU_080904_3_0_6"/>
<dbReference type="OrthoDB" id="9789690at2"/>
<dbReference type="UniPathway" id="UPA00602">
    <property type="reaction ID" value="UER00658"/>
</dbReference>
<dbReference type="UniPathway" id="UPA00909">
    <property type="reaction ID" value="UER00887"/>
</dbReference>
<dbReference type="GO" id="GO:0005829">
    <property type="term" value="C:cytosol"/>
    <property type="evidence" value="ECO:0007669"/>
    <property type="project" value="TreeGrafter"/>
</dbReference>
<dbReference type="GO" id="GO:0005886">
    <property type="term" value="C:plasma membrane"/>
    <property type="evidence" value="ECO:0007669"/>
    <property type="project" value="UniProtKB-SubCell"/>
</dbReference>
<dbReference type="GO" id="GO:0052657">
    <property type="term" value="F:guanine phosphoribosyltransferase activity"/>
    <property type="evidence" value="ECO:0007669"/>
    <property type="project" value="RHEA"/>
</dbReference>
<dbReference type="GO" id="GO:0004422">
    <property type="term" value="F:hypoxanthine phosphoribosyltransferase activity"/>
    <property type="evidence" value="ECO:0007669"/>
    <property type="project" value="TreeGrafter"/>
</dbReference>
<dbReference type="GO" id="GO:0000287">
    <property type="term" value="F:magnesium ion binding"/>
    <property type="evidence" value="ECO:0007669"/>
    <property type="project" value="UniProtKB-UniRule"/>
</dbReference>
<dbReference type="GO" id="GO:0000310">
    <property type="term" value="F:xanthine phosphoribosyltransferase activity"/>
    <property type="evidence" value="ECO:0007669"/>
    <property type="project" value="UniProtKB-UniRule"/>
</dbReference>
<dbReference type="GO" id="GO:0032263">
    <property type="term" value="P:GMP salvage"/>
    <property type="evidence" value="ECO:0007669"/>
    <property type="project" value="UniProtKB-UniRule"/>
</dbReference>
<dbReference type="GO" id="GO:0032264">
    <property type="term" value="P:IMP salvage"/>
    <property type="evidence" value="ECO:0007669"/>
    <property type="project" value="TreeGrafter"/>
</dbReference>
<dbReference type="GO" id="GO:0006166">
    <property type="term" value="P:purine ribonucleoside salvage"/>
    <property type="evidence" value="ECO:0007669"/>
    <property type="project" value="UniProtKB-KW"/>
</dbReference>
<dbReference type="GO" id="GO:0032265">
    <property type="term" value="P:XMP salvage"/>
    <property type="evidence" value="ECO:0007669"/>
    <property type="project" value="UniProtKB-UniRule"/>
</dbReference>
<dbReference type="CDD" id="cd06223">
    <property type="entry name" value="PRTases_typeI"/>
    <property type="match status" value="1"/>
</dbReference>
<dbReference type="FunFam" id="3.40.50.2020:FF:000009">
    <property type="entry name" value="Xanthine phosphoribosyltransferase"/>
    <property type="match status" value="1"/>
</dbReference>
<dbReference type="Gene3D" id="3.40.50.2020">
    <property type="match status" value="1"/>
</dbReference>
<dbReference type="HAMAP" id="MF_01903">
    <property type="entry name" value="XGPRT"/>
    <property type="match status" value="1"/>
</dbReference>
<dbReference type="InterPro" id="IPR000836">
    <property type="entry name" value="PRibTrfase_dom"/>
</dbReference>
<dbReference type="InterPro" id="IPR029057">
    <property type="entry name" value="PRTase-like"/>
</dbReference>
<dbReference type="InterPro" id="IPR023747">
    <property type="entry name" value="Xanthine_Guanine_PRibTrfase"/>
</dbReference>
<dbReference type="NCBIfam" id="NF006613">
    <property type="entry name" value="PRK09177.1"/>
    <property type="match status" value="1"/>
</dbReference>
<dbReference type="PANTHER" id="PTHR39563">
    <property type="entry name" value="XANTHINE PHOSPHORIBOSYLTRANSFERASE"/>
    <property type="match status" value="1"/>
</dbReference>
<dbReference type="PANTHER" id="PTHR39563:SF1">
    <property type="entry name" value="XANTHINE-GUANINE PHOSPHORIBOSYLTRANSFERASE"/>
    <property type="match status" value="1"/>
</dbReference>
<dbReference type="Pfam" id="PF00156">
    <property type="entry name" value="Pribosyltran"/>
    <property type="match status" value="1"/>
</dbReference>
<dbReference type="SUPFAM" id="SSF53271">
    <property type="entry name" value="PRTase-like"/>
    <property type="match status" value="1"/>
</dbReference>
<dbReference type="PROSITE" id="PS00103">
    <property type="entry name" value="PUR_PYR_PR_TRANSFER"/>
    <property type="match status" value="1"/>
</dbReference>